<protein>
    <recommendedName>
        <fullName evidence="2">Small ribosomal subunit protein uS12</fullName>
    </recommendedName>
    <alternativeName>
        <fullName evidence="3">30S ribosomal protein S12</fullName>
    </alternativeName>
</protein>
<comment type="function">
    <text evidence="2">With S4 and S5 plays an important role in translational accuracy.</text>
</comment>
<comment type="function">
    <text evidence="2">Interacts with and stabilizes bases of the 16S rRNA that are involved in tRNA selection in the A site and with the mRNA backbone. Located at the interface of the 30S and 50S subunits, it traverses the body of the 30S subunit contacting proteins on the other side and probably holding the rRNA structure together. The combined cluster of proteins S8, S12 and S17 appears to hold together the shoulder and platform of the 30S subunit.</text>
</comment>
<comment type="subunit">
    <text evidence="2">Part of the 30S ribosomal subunit. Contacts proteins S8 and S17. May interact with IF1 in the 30S initiation complex.</text>
</comment>
<comment type="similarity">
    <text evidence="2">Belongs to the universal ribosomal protein uS12 family.</text>
</comment>
<dbReference type="EMBL" id="CP001144">
    <property type="protein sequence ID" value="ACH76360.1"/>
    <property type="molecule type" value="Genomic_DNA"/>
</dbReference>
<dbReference type="RefSeq" id="WP_000246815.1">
    <property type="nucleotide sequence ID" value="NC_011205.1"/>
</dbReference>
<dbReference type="SMR" id="B5FJM2"/>
<dbReference type="GeneID" id="98390450"/>
<dbReference type="KEGG" id="sed:SeD_A3816"/>
<dbReference type="HOGENOM" id="CLU_104295_1_2_6"/>
<dbReference type="Proteomes" id="UP000008322">
    <property type="component" value="Chromosome"/>
</dbReference>
<dbReference type="GO" id="GO:0015935">
    <property type="term" value="C:small ribosomal subunit"/>
    <property type="evidence" value="ECO:0007669"/>
    <property type="project" value="InterPro"/>
</dbReference>
<dbReference type="GO" id="GO:0019843">
    <property type="term" value="F:rRNA binding"/>
    <property type="evidence" value="ECO:0007669"/>
    <property type="project" value="UniProtKB-UniRule"/>
</dbReference>
<dbReference type="GO" id="GO:0003735">
    <property type="term" value="F:structural constituent of ribosome"/>
    <property type="evidence" value="ECO:0007669"/>
    <property type="project" value="InterPro"/>
</dbReference>
<dbReference type="GO" id="GO:0000049">
    <property type="term" value="F:tRNA binding"/>
    <property type="evidence" value="ECO:0007669"/>
    <property type="project" value="UniProtKB-UniRule"/>
</dbReference>
<dbReference type="GO" id="GO:0006412">
    <property type="term" value="P:translation"/>
    <property type="evidence" value="ECO:0007669"/>
    <property type="project" value="UniProtKB-UniRule"/>
</dbReference>
<dbReference type="CDD" id="cd03368">
    <property type="entry name" value="Ribosomal_S12"/>
    <property type="match status" value="1"/>
</dbReference>
<dbReference type="FunFam" id="2.40.50.140:FF:000001">
    <property type="entry name" value="30S ribosomal protein S12"/>
    <property type="match status" value="1"/>
</dbReference>
<dbReference type="Gene3D" id="2.40.50.140">
    <property type="entry name" value="Nucleic acid-binding proteins"/>
    <property type="match status" value="1"/>
</dbReference>
<dbReference type="HAMAP" id="MF_00403_B">
    <property type="entry name" value="Ribosomal_uS12_B"/>
    <property type="match status" value="1"/>
</dbReference>
<dbReference type="InterPro" id="IPR012340">
    <property type="entry name" value="NA-bd_OB-fold"/>
</dbReference>
<dbReference type="InterPro" id="IPR006032">
    <property type="entry name" value="Ribosomal_uS12"/>
</dbReference>
<dbReference type="InterPro" id="IPR005679">
    <property type="entry name" value="Ribosomal_uS12_bac"/>
</dbReference>
<dbReference type="NCBIfam" id="TIGR00981">
    <property type="entry name" value="rpsL_bact"/>
    <property type="match status" value="1"/>
</dbReference>
<dbReference type="PANTHER" id="PTHR11652">
    <property type="entry name" value="30S RIBOSOMAL PROTEIN S12 FAMILY MEMBER"/>
    <property type="match status" value="1"/>
</dbReference>
<dbReference type="Pfam" id="PF00164">
    <property type="entry name" value="Ribosom_S12_S23"/>
    <property type="match status" value="1"/>
</dbReference>
<dbReference type="PIRSF" id="PIRSF002133">
    <property type="entry name" value="Ribosomal_S12/S23"/>
    <property type="match status" value="1"/>
</dbReference>
<dbReference type="PRINTS" id="PR01034">
    <property type="entry name" value="RIBOSOMALS12"/>
</dbReference>
<dbReference type="SUPFAM" id="SSF50249">
    <property type="entry name" value="Nucleic acid-binding proteins"/>
    <property type="match status" value="1"/>
</dbReference>
<dbReference type="PROSITE" id="PS00055">
    <property type="entry name" value="RIBOSOMAL_S12"/>
    <property type="match status" value="1"/>
</dbReference>
<sequence length="124" mass="13737">MATVNQLVRKPRARKVAKSNVPALEACPQKRGVCTRVYTTTPKKPNSALRKVCRVRLTNGFEVTSYIGGEGHNLQEHSVILIRGGRVKDLPGVRYHTVRGALDCSGVKDRKQARSKYGVKRPKA</sequence>
<feature type="chain" id="PRO_1000123510" description="Small ribosomal subunit protein uS12">
    <location>
        <begin position="1"/>
        <end position="124"/>
    </location>
</feature>
<feature type="modified residue" description="3-methylthioaspartic acid" evidence="1">
    <location>
        <position position="89"/>
    </location>
</feature>
<reference key="1">
    <citation type="journal article" date="2011" name="J. Bacteriol.">
        <title>Comparative genomics of 28 Salmonella enterica isolates: evidence for CRISPR-mediated adaptive sublineage evolution.</title>
        <authorList>
            <person name="Fricke W.F."/>
            <person name="Mammel M.K."/>
            <person name="McDermott P.F."/>
            <person name="Tartera C."/>
            <person name="White D.G."/>
            <person name="Leclerc J.E."/>
            <person name="Ravel J."/>
            <person name="Cebula T.A."/>
        </authorList>
    </citation>
    <scope>NUCLEOTIDE SEQUENCE [LARGE SCALE GENOMIC DNA]</scope>
    <source>
        <strain>CT_02021853</strain>
    </source>
</reference>
<proteinExistence type="inferred from homology"/>
<accession>B5FJM2</accession>
<name>RS12_SALDC</name>
<organism>
    <name type="scientific">Salmonella dublin (strain CT_02021853)</name>
    <dbReference type="NCBI Taxonomy" id="439851"/>
    <lineage>
        <taxon>Bacteria</taxon>
        <taxon>Pseudomonadati</taxon>
        <taxon>Pseudomonadota</taxon>
        <taxon>Gammaproteobacteria</taxon>
        <taxon>Enterobacterales</taxon>
        <taxon>Enterobacteriaceae</taxon>
        <taxon>Salmonella</taxon>
    </lineage>
</organism>
<evidence type="ECO:0000250" key="1"/>
<evidence type="ECO:0000255" key="2">
    <source>
        <dbReference type="HAMAP-Rule" id="MF_00403"/>
    </source>
</evidence>
<evidence type="ECO:0000305" key="3"/>
<keyword id="KW-0488">Methylation</keyword>
<keyword id="KW-0687">Ribonucleoprotein</keyword>
<keyword id="KW-0689">Ribosomal protein</keyword>
<keyword id="KW-0694">RNA-binding</keyword>
<keyword id="KW-0699">rRNA-binding</keyword>
<keyword id="KW-0820">tRNA-binding</keyword>
<gene>
    <name evidence="2" type="primary">rpsL</name>
    <name type="ordered locus">SeD_A3816</name>
</gene>